<name>IF2_STRP7</name>
<gene>
    <name evidence="2" type="primary">infB</name>
    <name type="ordered locus">SP70585_0616</name>
</gene>
<reference key="1">
    <citation type="journal article" date="2010" name="Genome Biol.">
        <title>Structure and dynamics of the pan-genome of Streptococcus pneumoniae and closely related species.</title>
        <authorList>
            <person name="Donati C."/>
            <person name="Hiller N.L."/>
            <person name="Tettelin H."/>
            <person name="Muzzi A."/>
            <person name="Croucher N.J."/>
            <person name="Angiuoli S.V."/>
            <person name="Oggioni M."/>
            <person name="Dunning Hotopp J.C."/>
            <person name="Hu F.Z."/>
            <person name="Riley D.R."/>
            <person name="Covacci A."/>
            <person name="Mitchell T.J."/>
            <person name="Bentley S.D."/>
            <person name="Kilian M."/>
            <person name="Ehrlich G.D."/>
            <person name="Rappuoli R."/>
            <person name="Moxon E.R."/>
            <person name="Masignani V."/>
        </authorList>
    </citation>
    <scope>NUCLEOTIDE SEQUENCE [LARGE SCALE GENOMIC DNA]</scope>
    <source>
        <strain>70585</strain>
    </source>
</reference>
<feature type="chain" id="PRO_1000190635" description="Translation initiation factor IF-2">
    <location>
        <begin position="1"/>
        <end position="930"/>
    </location>
</feature>
<feature type="domain" description="tr-type G">
    <location>
        <begin position="432"/>
        <end position="599"/>
    </location>
</feature>
<feature type="region of interest" description="Disordered" evidence="3">
    <location>
        <begin position="50"/>
        <end position="217"/>
    </location>
</feature>
<feature type="region of interest" description="Disordered" evidence="3">
    <location>
        <begin position="260"/>
        <end position="346"/>
    </location>
</feature>
<feature type="region of interest" description="G1" evidence="1">
    <location>
        <begin position="441"/>
        <end position="448"/>
    </location>
</feature>
<feature type="region of interest" description="G2" evidence="1">
    <location>
        <begin position="466"/>
        <end position="470"/>
    </location>
</feature>
<feature type="region of interest" description="G3" evidence="1">
    <location>
        <begin position="487"/>
        <end position="490"/>
    </location>
</feature>
<feature type="region of interest" description="G4" evidence="1">
    <location>
        <begin position="541"/>
        <end position="544"/>
    </location>
</feature>
<feature type="region of interest" description="G5" evidence="1">
    <location>
        <begin position="577"/>
        <end position="579"/>
    </location>
</feature>
<feature type="compositionally biased region" description="Low complexity" evidence="3">
    <location>
        <begin position="50"/>
        <end position="67"/>
    </location>
</feature>
<feature type="compositionally biased region" description="Basic and acidic residues" evidence="3">
    <location>
        <begin position="68"/>
        <end position="90"/>
    </location>
</feature>
<feature type="compositionally biased region" description="Basic and acidic residues" evidence="3">
    <location>
        <begin position="110"/>
        <end position="125"/>
    </location>
</feature>
<feature type="compositionally biased region" description="Low complexity" evidence="3">
    <location>
        <begin position="129"/>
        <end position="141"/>
    </location>
</feature>
<feature type="compositionally biased region" description="Basic and acidic residues" evidence="3">
    <location>
        <begin position="157"/>
        <end position="167"/>
    </location>
</feature>
<feature type="compositionally biased region" description="Basic and acidic residues" evidence="3">
    <location>
        <begin position="262"/>
        <end position="295"/>
    </location>
</feature>
<feature type="compositionally biased region" description="Low complexity" evidence="3">
    <location>
        <begin position="309"/>
        <end position="318"/>
    </location>
</feature>
<feature type="compositionally biased region" description="Basic and acidic residues" evidence="3">
    <location>
        <begin position="337"/>
        <end position="346"/>
    </location>
</feature>
<feature type="binding site" evidence="2">
    <location>
        <begin position="441"/>
        <end position="448"/>
    </location>
    <ligand>
        <name>GTP</name>
        <dbReference type="ChEBI" id="CHEBI:37565"/>
    </ligand>
</feature>
<feature type="binding site" evidence="2">
    <location>
        <begin position="487"/>
        <end position="491"/>
    </location>
    <ligand>
        <name>GTP</name>
        <dbReference type="ChEBI" id="CHEBI:37565"/>
    </ligand>
</feature>
<feature type="binding site" evidence="2">
    <location>
        <begin position="541"/>
        <end position="544"/>
    </location>
    <ligand>
        <name>GTP</name>
        <dbReference type="ChEBI" id="CHEBI:37565"/>
    </ligand>
</feature>
<proteinExistence type="inferred from homology"/>
<evidence type="ECO:0000250" key="1"/>
<evidence type="ECO:0000255" key="2">
    <source>
        <dbReference type="HAMAP-Rule" id="MF_00100"/>
    </source>
</evidence>
<evidence type="ECO:0000256" key="3">
    <source>
        <dbReference type="SAM" id="MobiDB-lite"/>
    </source>
</evidence>
<keyword id="KW-0963">Cytoplasm</keyword>
<keyword id="KW-0342">GTP-binding</keyword>
<keyword id="KW-0396">Initiation factor</keyword>
<keyword id="KW-0547">Nucleotide-binding</keyword>
<keyword id="KW-0648">Protein biosynthesis</keyword>
<comment type="function">
    <text evidence="2">One of the essential components for the initiation of protein synthesis. Protects formylmethionyl-tRNA from spontaneous hydrolysis and promotes its binding to the 30S ribosomal subunits. Also involved in the hydrolysis of GTP during the formation of the 70S ribosomal complex.</text>
</comment>
<comment type="subcellular location">
    <subcellularLocation>
        <location evidence="2">Cytoplasm</location>
    </subcellularLocation>
</comment>
<comment type="similarity">
    <text evidence="2">Belongs to the TRAFAC class translation factor GTPase superfamily. Classic translation factor GTPase family. IF-2 subfamily.</text>
</comment>
<protein>
    <recommendedName>
        <fullName evidence="2">Translation initiation factor IF-2</fullName>
    </recommendedName>
</protein>
<sequence>MSKKRLYEIAKELGKESKEVVARAKELGLDVKSHSSSVEEAVAAKIAASFKPAAAPKVEAKPAAPKVSAEKKAEKSEPAKPAVAKEEAKPAEPVAPKTEKVAAKPQSRNFKAEREARAKEQAERRKQNKGNNRDQQQNGNRQKNDGRNGGKQGQSNRDNRRFNDQAKKQQGQQKRRNERRQQEDKRSNQAAPRIDFKARAAALKAEQNAEYARSSEERFKQYQAAKEALAQANKRKEPEEIFEEAAKLAEQAQQVQAVVEVVPEKKEPAVDTRRKKQARPDKNRDDYDHEEDGPRKQQKNRSSQNQVRNQKNSNWNNNKKNKKGNNKNNRNQTPKPVTERKFHELPTEFEYTDGMTVAEIAKRIKREPAEIVKKLFMMGVMATQNQSLDGETIELLMVDYGIEAKQKVEVDNADIERFFVEDGYLNEDELVERPPVVTIMGHVDHGKTTLLDTLRNSRVATGEAGGITQHIGAYQIVENGKKITFLDTPGHAAFTSMRARGASVTDITILVVAADDGVMPQTIEAINHSKAANVPIIVAINKIDKPGANPERVIGELAEHGVMSTAWGGDSEFVEISAKFNQNIEELLETVLLVAEIQELKADPTVRAIGTVIEARLDKGKGAVATLLVQQGTLNVQDPIVVGNTFGRVRAMTNDLGRRVKVAGPSTPVSITGLNEAPMAGDHFAVYEDEKSARAAGEERAKRALMKQRQATQRVSLENLFDTLKAGELKSVNVIIKADVQGSVEALSASLQKIDVEGVKVTIVHSAVGAINESDVTLAEASNAFIVGFNVRPTPQARQQAEADDVEIRLHSIIYKVIEEMEEAMKGMLDPEFEEKVIGEAVIRETFKVSKVGTIGGFMVINGKVARDSKVRVIRDGVVIYDGELASLKHYKDDVKEVTNGREGGLMIDGYNDIKMDDVIEAYVMEEIKR</sequence>
<accession>C1C5S8</accession>
<dbReference type="EMBL" id="CP000918">
    <property type="protein sequence ID" value="ACO16455.1"/>
    <property type="molecule type" value="Genomic_DNA"/>
</dbReference>
<dbReference type="RefSeq" id="WP_000039202.1">
    <property type="nucleotide sequence ID" value="NC_012468.1"/>
</dbReference>
<dbReference type="SMR" id="C1C5S8"/>
<dbReference type="KEGG" id="snm:SP70585_0616"/>
<dbReference type="HOGENOM" id="CLU_006301_5_0_9"/>
<dbReference type="Proteomes" id="UP000002211">
    <property type="component" value="Chromosome"/>
</dbReference>
<dbReference type="GO" id="GO:0005829">
    <property type="term" value="C:cytosol"/>
    <property type="evidence" value="ECO:0007669"/>
    <property type="project" value="TreeGrafter"/>
</dbReference>
<dbReference type="GO" id="GO:0005525">
    <property type="term" value="F:GTP binding"/>
    <property type="evidence" value="ECO:0007669"/>
    <property type="project" value="UniProtKB-KW"/>
</dbReference>
<dbReference type="GO" id="GO:0003924">
    <property type="term" value="F:GTPase activity"/>
    <property type="evidence" value="ECO:0007669"/>
    <property type="project" value="UniProtKB-UniRule"/>
</dbReference>
<dbReference type="GO" id="GO:0003743">
    <property type="term" value="F:translation initiation factor activity"/>
    <property type="evidence" value="ECO:0007669"/>
    <property type="project" value="UniProtKB-UniRule"/>
</dbReference>
<dbReference type="CDD" id="cd01887">
    <property type="entry name" value="IF2_eIF5B"/>
    <property type="match status" value="1"/>
</dbReference>
<dbReference type="CDD" id="cd03702">
    <property type="entry name" value="IF2_mtIF2_II"/>
    <property type="match status" value="1"/>
</dbReference>
<dbReference type="CDD" id="cd03692">
    <property type="entry name" value="mtIF2_IVc"/>
    <property type="match status" value="1"/>
</dbReference>
<dbReference type="FunFam" id="1.10.10.2480:FF:000003">
    <property type="entry name" value="Translation initiation factor IF-2"/>
    <property type="match status" value="1"/>
</dbReference>
<dbReference type="FunFam" id="2.40.30.10:FF:000007">
    <property type="entry name" value="Translation initiation factor IF-2"/>
    <property type="match status" value="1"/>
</dbReference>
<dbReference type="FunFam" id="2.40.30.10:FF:000008">
    <property type="entry name" value="Translation initiation factor IF-2"/>
    <property type="match status" value="1"/>
</dbReference>
<dbReference type="FunFam" id="3.40.50.10050:FF:000001">
    <property type="entry name" value="Translation initiation factor IF-2"/>
    <property type="match status" value="1"/>
</dbReference>
<dbReference type="FunFam" id="3.40.50.300:FF:000019">
    <property type="entry name" value="Translation initiation factor IF-2"/>
    <property type="match status" value="1"/>
</dbReference>
<dbReference type="Gene3D" id="1.10.10.2480">
    <property type="match status" value="1"/>
</dbReference>
<dbReference type="Gene3D" id="3.40.50.300">
    <property type="entry name" value="P-loop containing nucleotide triphosphate hydrolases"/>
    <property type="match status" value="1"/>
</dbReference>
<dbReference type="Gene3D" id="2.40.30.10">
    <property type="entry name" value="Translation factors"/>
    <property type="match status" value="2"/>
</dbReference>
<dbReference type="Gene3D" id="3.40.50.10050">
    <property type="entry name" value="Translation initiation factor IF- 2, domain 3"/>
    <property type="match status" value="1"/>
</dbReference>
<dbReference type="HAMAP" id="MF_00100_B">
    <property type="entry name" value="IF_2_B"/>
    <property type="match status" value="1"/>
</dbReference>
<dbReference type="InterPro" id="IPR053905">
    <property type="entry name" value="EF-G-like_DII"/>
</dbReference>
<dbReference type="InterPro" id="IPR044145">
    <property type="entry name" value="IF2_II"/>
</dbReference>
<dbReference type="InterPro" id="IPR006847">
    <property type="entry name" value="IF2_N"/>
</dbReference>
<dbReference type="InterPro" id="IPR027417">
    <property type="entry name" value="P-loop_NTPase"/>
</dbReference>
<dbReference type="InterPro" id="IPR005225">
    <property type="entry name" value="Small_GTP-bd"/>
</dbReference>
<dbReference type="InterPro" id="IPR000795">
    <property type="entry name" value="T_Tr_GTP-bd_dom"/>
</dbReference>
<dbReference type="InterPro" id="IPR000178">
    <property type="entry name" value="TF_IF2_bacterial-like"/>
</dbReference>
<dbReference type="InterPro" id="IPR015760">
    <property type="entry name" value="TIF_IF2"/>
</dbReference>
<dbReference type="InterPro" id="IPR023115">
    <property type="entry name" value="TIF_IF2_dom3"/>
</dbReference>
<dbReference type="InterPro" id="IPR036925">
    <property type="entry name" value="TIF_IF2_dom3_sf"/>
</dbReference>
<dbReference type="InterPro" id="IPR009000">
    <property type="entry name" value="Transl_B-barrel_sf"/>
</dbReference>
<dbReference type="NCBIfam" id="TIGR00487">
    <property type="entry name" value="IF-2"/>
    <property type="match status" value="1"/>
</dbReference>
<dbReference type="NCBIfam" id="TIGR00231">
    <property type="entry name" value="small_GTP"/>
    <property type="match status" value="1"/>
</dbReference>
<dbReference type="PANTHER" id="PTHR43381:SF5">
    <property type="entry name" value="TR-TYPE G DOMAIN-CONTAINING PROTEIN"/>
    <property type="match status" value="1"/>
</dbReference>
<dbReference type="PANTHER" id="PTHR43381">
    <property type="entry name" value="TRANSLATION INITIATION FACTOR IF-2-RELATED"/>
    <property type="match status" value="1"/>
</dbReference>
<dbReference type="Pfam" id="PF22042">
    <property type="entry name" value="EF-G_D2"/>
    <property type="match status" value="1"/>
</dbReference>
<dbReference type="Pfam" id="PF00009">
    <property type="entry name" value="GTP_EFTU"/>
    <property type="match status" value="1"/>
</dbReference>
<dbReference type="Pfam" id="PF11987">
    <property type="entry name" value="IF-2"/>
    <property type="match status" value="1"/>
</dbReference>
<dbReference type="Pfam" id="PF04760">
    <property type="entry name" value="IF2_N"/>
    <property type="match status" value="2"/>
</dbReference>
<dbReference type="SUPFAM" id="SSF52156">
    <property type="entry name" value="Initiation factor IF2/eIF5b, domain 3"/>
    <property type="match status" value="1"/>
</dbReference>
<dbReference type="SUPFAM" id="SSF52540">
    <property type="entry name" value="P-loop containing nucleoside triphosphate hydrolases"/>
    <property type="match status" value="1"/>
</dbReference>
<dbReference type="SUPFAM" id="SSF50447">
    <property type="entry name" value="Translation proteins"/>
    <property type="match status" value="2"/>
</dbReference>
<dbReference type="PROSITE" id="PS51722">
    <property type="entry name" value="G_TR_2"/>
    <property type="match status" value="1"/>
</dbReference>
<dbReference type="PROSITE" id="PS01176">
    <property type="entry name" value="IF2"/>
    <property type="match status" value="1"/>
</dbReference>
<organism>
    <name type="scientific">Streptococcus pneumoniae (strain 70585)</name>
    <dbReference type="NCBI Taxonomy" id="488221"/>
    <lineage>
        <taxon>Bacteria</taxon>
        <taxon>Bacillati</taxon>
        <taxon>Bacillota</taxon>
        <taxon>Bacilli</taxon>
        <taxon>Lactobacillales</taxon>
        <taxon>Streptococcaceae</taxon>
        <taxon>Streptococcus</taxon>
    </lineage>
</organism>